<organism>
    <name type="scientific">Thermosynechococcus vestitus (strain NIES-2133 / IAM M-273 / BP-1)</name>
    <dbReference type="NCBI Taxonomy" id="197221"/>
    <lineage>
        <taxon>Bacteria</taxon>
        <taxon>Bacillati</taxon>
        <taxon>Cyanobacteriota</taxon>
        <taxon>Cyanophyceae</taxon>
        <taxon>Acaryochloridales</taxon>
        <taxon>Thermosynechococcaceae</taxon>
        <taxon>Thermosynechococcus</taxon>
    </lineage>
</organism>
<gene>
    <name evidence="1" type="primary">psbL</name>
    <name type="ordered locus">tsr1543</name>
</gene>
<feature type="chain" id="PRO_0000219790" description="Photosystem II reaction center protein L">
    <location>
        <begin position="1"/>
        <end position="37"/>
    </location>
</feature>
<feature type="topological domain" description="Cytoplasmic" evidence="13 16">
    <location>
        <begin position="1"/>
        <end position="13"/>
    </location>
</feature>
<feature type="transmembrane region" description="Helical" evidence="13 16">
    <location>
        <begin position="14"/>
        <end position="35"/>
    </location>
</feature>
<feature type="topological domain" description="Lumenal" evidence="13 16">
    <location>
        <begin position="36"/>
        <end position="37"/>
    </location>
</feature>
<feature type="helix" evidence="17">
    <location>
        <begin position="14"/>
        <end position="36"/>
    </location>
</feature>
<protein>
    <recommendedName>
        <fullName evidence="1">Photosystem II reaction center protein L</fullName>
        <shortName evidence="1">PSII-L</shortName>
    </recommendedName>
</protein>
<keyword id="KW-0002">3D-structure</keyword>
<keyword id="KW-0903">Direct protein sequencing</keyword>
<keyword id="KW-0472">Membrane</keyword>
<keyword id="KW-0602">Photosynthesis</keyword>
<keyword id="KW-0604">Photosystem II</keyword>
<keyword id="KW-0674">Reaction center</keyword>
<keyword id="KW-1185">Reference proteome</keyword>
<keyword id="KW-0793">Thylakoid</keyword>
<keyword id="KW-0812">Transmembrane</keyword>
<keyword id="KW-1133">Transmembrane helix</keyword>
<reference key="1">
    <citation type="journal article" date="2002" name="DNA Res.">
        <title>Complete genome structure of the thermophilic cyanobacterium Thermosynechococcus elongatus BP-1.</title>
        <authorList>
            <person name="Nakamura Y."/>
            <person name="Kaneko T."/>
            <person name="Sato S."/>
            <person name="Ikeuchi M."/>
            <person name="Katoh H."/>
            <person name="Sasamoto S."/>
            <person name="Watanabe A."/>
            <person name="Iriguchi M."/>
            <person name="Kawashima K."/>
            <person name="Kimura T."/>
            <person name="Kishida Y."/>
            <person name="Kiyokawa C."/>
            <person name="Kohara M."/>
            <person name="Matsumoto M."/>
            <person name="Matsuno A."/>
            <person name="Nakazaki N."/>
            <person name="Shimpo S."/>
            <person name="Sugimoto M."/>
            <person name="Takeuchi C."/>
            <person name="Yamada M."/>
            <person name="Tabata S."/>
        </authorList>
    </citation>
    <scope>NUCLEOTIDE SEQUENCE [LARGE SCALE GENOMIC DNA]</scope>
    <source>
        <strain>NIES-2133 / IAM M-273 / BP-1</strain>
    </source>
</reference>
<reference key="2">
    <citation type="journal article" date="2007" name="Biochim. Biophys. Acta">
        <title>Ycf12 is a core subunit in the photosystem II complex.</title>
        <authorList>
            <person name="Kashino Y."/>
            <person name="Takahashi T."/>
            <person name="Inoue-Kashino N."/>
            <person name="Ban A."/>
            <person name="Ikeda Y."/>
            <person name="Satoh K."/>
            <person name="Sugiura M."/>
        </authorList>
    </citation>
    <scope>PROTEIN SEQUENCE OF 1-15</scope>
    <scope>COFACTOR</scope>
    <scope>SUBCELLULAR LOCATION</scope>
</reference>
<reference key="3">
    <citation type="journal article" date="2007" name="Plant Cell Physiol.">
        <title>Absence of the PsbZ subunit prevents association of PsbK and Ycf12 with the PSII complex in the thermophilic cyanobacterium Thermosynechococcus elongatus BP-1.</title>
        <authorList>
            <person name="Iwai M."/>
            <person name="Suzuki T."/>
            <person name="Dohmae N."/>
            <person name="Inoue Y."/>
            <person name="Ikeuchi M."/>
        </authorList>
    </citation>
    <scope>PROTEIN SEQUENCE OF 1-10</scope>
    <scope>COFACTOR</scope>
    <scope>SUBCELLULAR LOCATION</scope>
</reference>
<reference key="4">
    <citation type="journal article" date="2004" name="Science">
        <title>Architecture of the photosynthetic oxygen-evolving center.</title>
        <authorList>
            <person name="Ferreira K.N."/>
            <person name="Iverson T.M."/>
            <person name="Maghlaoui K."/>
            <person name="Barber J."/>
            <person name="Iwata S."/>
        </authorList>
    </citation>
    <scope>X-RAY CRYSTALLOGRAPHY (3.50 ANGSTROMS) IN PHOTOSYSTEM II</scope>
    <scope>COFACTOR</scope>
    <scope>SUBUNIT</scope>
    <scope>SUBCELLULAR LOCATION</scope>
</reference>
<reference key="5">
    <citation type="journal article" date="2005" name="Nature">
        <title>Towards complete cofactor arrangement in the 3.0 A resolution structure of photosystem II.</title>
        <authorList>
            <person name="Loll B."/>
            <person name="Kern J."/>
            <person name="Saenger W."/>
            <person name="Zouni A."/>
            <person name="Biesiadka J."/>
        </authorList>
    </citation>
    <scope>X-RAY CRYSTALLOGRAPHY (3.00 ANGSTROMS) IN PHOTOSYSTEM II</scope>
    <scope>FUNCTION</scope>
    <scope>COFACTOR</scope>
    <scope>SUBUNIT</scope>
    <scope>SUBCELLULAR LOCATION</scope>
    <source>
        <strain>NIES-2133 / IAM M-273 / BP-1</strain>
    </source>
</reference>
<reference key="6">
    <citation type="journal article" date="2009" name="Nat. Struct. Mol. Biol.">
        <title>Cyanobacterial photosystem II at 2.9-A resolution and the role of quinones, lipids, channels and chloride.</title>
        <authorList>
            <person name="Guskov A."/>
            <person name="Kern J."/>
            <person name="Gabdulkhakov A."/>
            <person name="Broser M."/>
            <person name="Zouni A."/>
            <person name="Saenger W."/>
        </authorList>
    </citation>
    <scope>X-RAY CRYSTALLOGRAPHY (2.90 ANGSTROMS) IN PHOTOSYSTEM II</scope>
    <scope>COFACTOR</scope>
    <scope>SUBUNIT</scope>
    <scope>SUBCELLULAR LOCATION</scope>
    <scope>MASS SPECTROMETRY</scope>
    <scope>TOPOLOGY</scope>
    <source>
        <strain>NIES-2133 / IAM M-273 / BP-1</strain>
    </source>
</reference>
<reference key="7">
    <citation type="journal article" date="2010" name="J. Biol. Chem.">
        <title>Crystal structure of monomeric photosystem II from Thermosynechococcus elongatus at 3.6 A resolution.</title>
        <authorList>
            <person name="Broser M."/>
            <person name="Gabdulkhakov A."/>
            <person name="Kern J."/>
            <person name="Guskov A."/>
            <person name="Muh F."/>
            <person name="Saenger W."/>
            <person name="Zouni A."/>
        </authorList>
    </citation>
    <scope>X-RAY CRYSTALLOGRAPHY (3.60 ANGSTROMS) IN PHOTOSYSTEM II</scope>
    <scope>FUNCTION</scope>
    <scope>COFACTOR</scope>
    <scope>SUBUNIT</scope>
    <scope>SUBCELLULAR LOCATION</scope>
    <scope>MASS SPECTROMETRY</scope>
    <source>
        <strain>NIES-2133 / IAM M-273 / BP-1</strain>
    </source>
</reference>
<reference key="8">
    <citation type="journal article" date="2011" name="J. Biol. Chem.">
        <title>Structural basis of cyanobacterial photosystem II inhibition by the herbicide terbutryn.</title>
        <authorList>
            <person name="Broser M."/>
            <person name="Glockner C."/>
            <person name="Gabdulkhakov A."/>
            <person name="Guskov A."/>
            <person name="Buchta J."/>
            <person name="Kern J."/>
            <person name="Muh F."/>
            <person name="Dau H."/>
            <person name="Saenger W."/>
            <person name="Zouni A."/>
        </authorList>
    </citation>
    <scope>X-RAY CRYSTALLOGRAPHY (3.20 ANGSTROMS) IN PHOTOSYSTEM II</scope>
    <scope>FUNCTION</scope>
    <scope>COFACTOR</scope>
    <scope>SUBUNIT</scope>
    <scope>SUBCELLULAR LOCATION</scope>
</reference>
<reference key="9">
    <citation type="journal article" date="2012" name="Proc. Natl. Acad. Sci. U.S.A.">
        <title>Room temperature femtosecond X-ray diffraction of photosystem II microcrystals.</title>
        <authorList>
            <person name="Kern J."/>
            <person name="Alonso-Mori R."/>
            <person name="Hellmich J."/>
            <person name="Tran R."/>
            <person name="Hattne J."/>
            <person name="Laksmono H."/>
            <person name="Glockner C."/>
            <person name="Echols N."/>
            <person name="Sierra R.G."/>
            <person name="Sellberg J."/>
            <person name="Lassalle-Kaiser B."/>
            <person name="Gildea R.J."/>
            <person name="Glatzel P."/>
            <person name="Grosse-Kunstleve R.W."/>
            <person name="Latimer M.J."/>
            <person name="McQueen T.A."/>
            <person name="DiFiore D."/>
            <person name="Fry A.R."/>
            <person name="Messerschmidt M."/>
            <person name="Miahnahri A."/>
            <person name="Schafer D.W."/>
            <person name="Seibert M.M."/>
            <person name="Sokaras D."/>
            <person name="Weng T.C."/>
            <person name="Zwart P.H."/>
            <person name="White W.E."/>
            <person name="Adams P.D."/>
            <person name="Bogan M.J."/>
            <person name="Boutet S."/>
            <person name="Williams G.J."/>
            <person name="Messinger J."/>
            <person name="Sauter N.K."/>
            <person name="Zouni A."/>
            <person name="Bergmann U."/>
            <person name="Yano J."/>
            <person name="Yachandra V.K."/>
        </authorList>
    </citation>
    <scope>X-RAY CRYSTALLOGRAPHY (6.56 ANGSTROMS) IN PHOTOSYSTEM II</scope>
    <scope>COFACTOR</scope>
    <scope>SUBUNIT</scope>
    <scope>SUBCELLULAR LOCATION</scope>
    <source>
        <strain>NIES-2133 / IAM M-273 / BP-1</strain>
    </source>
</reference>
<reference key="10">
    <citation type="journal article" date="2013" name="Science">
        <title>Simultaneous femtosecond X-ray spectroscopy and diffraction of photosystem II at room temperature.</title>
        <authorList>
            <person name="Kern J."/>
            <person name="Alonso-Mori R."/>
            <person name="Tran R."/>
            <person name="Hattne J."/>
            <person name="Gildea R.J."/>
            <person name="Echols N."/>
            <person name="Glockner C."/>
            <person name="Hellmich J."/>
            <person name="Laksmono H."/>
            <person name="Sierra R.G."/>
            <person name="Lassalle-Kaiser B."/>
            <person name="Koroidov S."/>
            <person name="Lampe A."/>
            <person name="Han G."/>
            <person name="Gul S."/>
            <person name="Difiore D."/>
            <person name="Milathianaki D."/>
            <person name="Fry A.R."/>
            <person name="Miahnahri A."/>
            <person name="Schafer D.W."/>
            <person name="Messerschmidt M."/>
            <person name="Seibert M.M."/>
            <person name="Koglin J.E."/>
            <person name="Sokaras D."/>
            <person name="Weng T.C."/>
            <person name="Sellberg J."/>
            <person name="Latimer M.J."/>
            <person name="Grosse-Kunstleve R.W."/>
            <person name="Zwart P.H."/>
            <person name="White W.E."/>
            <person name="Glatzel P."/>
            <person name="Adams P.D."/>
            <person name="Bogan M.J."/>
            <person name="Williams G.J."/>
            <person name="Boutet S."/>
            <person name="Messinger J."/>
            <person name="Zouni A."/>
            <person name="Sauter N.K."/>
            <person name="Yachandra V.K."/>
            <person name="Bergmann U."/>
            <person name="Yano J."/>
        </authorList>
    </citation>
    <scope>X-RAY CRYSTALLOGRAPHY (5.70 ANGSTROMS) IN PHOTOSYSTEM II</scope>
    <scope>COFACTOR</scope>
    <scope>SUBUNIT</scope>
    <scope>SUBCELLULAR LOCATION</scope>
    <source>
        <strain>NIES-2133 / IAM M-273 / BP-1</strain>
    </source>
</reference>
<reference key="11">
    <citation type="journal article" date="2014" name="Nature">
        <title>Serial time-resolved crystallography of photosystem II using a femtosecond X-ray laser.</title>
        <authorList>
            <person name="Kupitz C."/>
            <person name="Basu S."/>
            <person name="Grotjohann I."/>
            <person name="Fromme R."/>
            <person name="Zatsepin N.A."/>
            <person name="Rendek K.N."/>
            <person name="Hunter M.S."/>
            <person name="Shoeman R.L."/>
            <person name="White T.A."/>
            <person name="Wang D."/>
            <person name="James D."/>
            <person name="Yang J.H."/>
            <person name="Cobb D.E."/>
            <person name="Reeder B."/>
            <person name="Sierra R.G."/>
            <person name="Liu H."/>
            <person name="Barty A."/>
            <person name="Aquila A.L."/>
            <person name="Deponte D."/>
            <person name="Kirian R.A."/>
            <person name="Bari S."/>
            <person name="Bergkamp J.J."/>
            <person name="Beyerlein K.R."/>
            <person name="Bogan M.J."/>
            <person name="Caleman C."/>
            <person name="Chao T.C."/>
            <person name="Conrad C.E."/>
            <person name="Davis K.M."/>
            <person name="Fleckenstein H."/>
            <person name="Galli L."/>
            <person name="Hau-Riege S.P."/>
            <person name="Kassemeyer S."/>
            <person name="Laksmono H."/>
            <person name="Liang M."/>
            <person name="Lomb L."/>
            <person name="Marchesini S."/>
            <person name="Martin A.V."/>
            <person name="Messerschmidt M."/>
            <person name="Milathianaki D."/>
            <person name="Nass K."/>
            <person name="Ros A."/>
            <person name="Roy-Chowdhury S."/>
            <person name="Schmidt K."/>
            <person name="Seibert M."/>
            <person name="Steinbrener J."/>
            <person name="Stellato F."/>
            <person name="Yan L."/>
            <person name="Yoon C."/>
            <person name="Moore T.A."/>
            <person name="Moore A.L."/>
            <person name="Pushkar Y."/>
            <person name="Williams G.J."/>
            <person name="Boutet S."/>
            <person name="Doak R.B."/>
            <person name="Weierstall U."/>
            <person name="Frank M."/>
            <person name="Chapman H.N."/>
            <person name="Spence J.C."/>
            <person name="Fromme P."/>
        </authorList>
    </citation>
    <scope>X-RAY CRYSTALLOGRAPHY (5.00 ANGSTROMS) IN PHOTOSYSTEM II</scope>
    <scope>COFACTOR</scope>
    <scope>SUBUNIT</scope>
    <scope>SUBCELLULAR LOCATION</scope>
    <source>
        <strain>NIES-2133 / IAM M-273 / BP-1</strain>
    </source>
</reference>
<reference key="12">
    <citation type="journal article" date="2014" name="Nat. Commun.">
        <title>Taking snapshots of photosynthetic water oxidation using femtosecond X-ray diffraction and spectroscopy.</title>
        <authorList>
            <person name="Kern J."/>
            <person name="Tran R."/>
            <person name="Alonso-Mori R."/>
            <person name="Koroidov S."/>
            <person name="Echols N."/>
            <person name="Hattne J."/>
            <person name="Ibrahim M."/>
            <person name="Gul S."/>
            <person name="Laksmono H."/>
            <person name="Sierra R.G."/>
            <person name="Gildea R.J."/>
            <person name="Han G."/>
            <person name="Hellmich J."/>
            <person name="Lassalle-Kaiser B."/>
            <person name="Chatterjee R."/>
            <person name="Brewster A.S."/>
            <person name="Stan C.A."/>
            <person name="Gloeckner C."/>
            <person name="Lampe A."/>
            <person name="DiFiore D."/>
            <person name="Milathianaki D."/>
            <person name="Fry A.R."/>
            <person name="Seibert M.M."/>
            <person name="Koglin J.E."/>
            <person name="Gallo E."/>
            <person name="Uhlig J."/>
            <person name="Sokaras D."/>
            <person name="Weng T.C."/>
            <person name="Zwart P.H."/>
            <person name="Skinner D.E."/>
            <person name="Bogan M.J."/>
            <person name="Messerschmidt M."/>
            <person name="Glatzel P."/>
            <person name="Williams G.J."/>
            <person name="Boutet S."/>
            <person name="Adams P.D."/>
            <person name="Zouni A."/>
            <person name="Messinger J."/>
            <person name="Sauter N.K."/>
            <person name="Bergmann U."/>
            <person name="Yano J."/>
            <person name="Yachandra V.K."/>
        </authorList>
    </citation>
    <scope>X-RAY CRYSTALLOGRAPHY (4.50 ANGSTROMS) IN PHOTOSYSTEM II</scope>
    <scope>FUNCTION</scope>
    <scope>COFACTOR</scope>
    <scope>SUBUNIT</scope>
    <scope>SUBCELLULAR LOCATION</scope>
    <source>
        <strain>NIES-2133 / IAM M-273 / BP-1</strain>
    </source>
</reference>
<reference evidence="14 15 16" key="13">
    <citation type="journal article" date="2021" name="Nat. Plants">
        <title>Structural insights into photosystem II assembly.</title>
        <authorList>
            <person name="Zabret J."/>
            <person name="Bohn S."/>
            <person name="Schuller S.K."/>
            <person name="Arnolds O."/>
            <person name="Moller M."/>
            <person name="Meier-Credo J."/>
            <person name="Liauw P."/>
            <person name="Chan A."/>
            <person name="Tajkhorshid E."/>
            <person name="Langer J.D."/>
            <person name="Stoll R."/>
            <person name="Krieger-Liszkay A."/>
            <person name="Engel B.D."/>
            <person name="Rudack T."/>
            <person name="Schuller J.M."/>
            <person name="Nowaczyk M.M."/>
        </authorList>
    </citation>
    <scope>STRUCTURE BY ELECTRON MICROSCOPY (2.68 ANGSTROMS) IN PSII-I ASSEMBLY COMPLEX</scope>
    <scope>SUBUNIT</scope>
    <scope>SUBCELLULAR LOCATION</scope>
    <scope>TOPOLOGY</scope>
    <source>
        <strain>NIES-2133 / IAM M-273 / BP-1</strain>
    </source>
</reference>
<comment type="function">
    <text evidence="1 7 8 11">One of the components of the core complex of photosystem II (PSII). PSII is a light-driven water:plastoquinone oxidoreductase that uses light energy to abstract electrons from H(2)O, generating O(2) and a proton gradient subsequently used for ATP formation. It consists of a core antenna complex that captures photons, and an electron transfer chain that converts photonic excitation into a charge separation. This subunit is found at the monomer-monomer interface and is required for correct PSII assembly and/or dimerization. This subunit may make specific contacts with lipid(s) (PubMed:16355230).</text>
</comment>
<comment type="cofactor">
    <text evidence="2 3 4 5 6 7 8 9 10 11 12">PSII binds multiple chlorophylls, carotenoids and specific lipids.</text>
</comment>
<comment type="subunit">
    <text evidence="1 2 3 6 7 8 9 10 11 12 13">PSII is composed of 1 copy each of membrane proteins PsbA, PsbB, PsbC, PsbD, PsbE, PsbF, PsbH, PsbI, PsbJ, PsbK, PsbL, PsbM, PsbT, PsbX, PsbY, PsbZ, Psb30/Ycf12, peripheral proteins PsbO, CyanoQ (PsbQ), PsbU, PsbV and a large number of cofactors. It forms dimeric complexes. Part of a photosystem II (PSII) assembly intermediate complex PSII-I; crystallized from a strain deleted of psbJ, it forms monomeric PSII before addition of the oxygen evolving complex. PSII-I includes 3 assembly factors not found in mature PSII (Psb27, Psb28 and Psb34) (PubMed:33846594).</text>
</comment>
<comment type="subcellular location">
    <subcellularLocation>
        <location evidence="1 2 3 4 5 6 7 8 9 10 11 12 13">Cellular thylakoid membrane</location>
        <topology evidence="1 2 3 4 5 6 7 8 9 10 11 12 13">Single-pass membrane protein</topology>
    </subcellularLocation>
</comment>
<comment type="mass spectrometry" mass="4301.0" error="4.0" method="MALDI" evidence="6"/>
<comment type="mass spectrometry" mass="4299.0" method="MALDI" evidence="7"/>
<comment type="similarity">
    <text evidence="1">Belongs to the PsbL family.</text>
</comment>
<proteinExistence type="evidence at protein level"/>
<name>PSBL_THEVB</name>
<accession>Q8DIN8</accession>
<dbReference type="EMBL" id="BA000039">
    <property type="protein sequence ID" value="BAC09095.1"/>
    <property type="molecule type" value="Genomic_DNA"/>
</dbReference>
<dbReference type="RefSeq" id="NP_682333.1">
    <property type="nucleotide sequence ID" value="NC_004113.1"/>
</dbReference>
<dbReference type="RefSeq" id="WP_011057383.1">
    <property type="nucleotide sequence ID" value="NC_004113.1"/>
</dbReference>
<dbReference type="PDB" id="1S5L">
    <property type="method" value="X-ray"/>
    <property type="resolution" value="3.50 A"/>
    <property type="chains" value="L/l=1-37"/>
</dbReference>
<dbReference type="PDB" id="2AXT">
    <property type="method" value="X-ray"/>
    <property type="resolution" value="3.00 A"/>
    <property type="chains" value="L/l=1-37"/>
</dbReference>
<dbReference type="PDB" id="3KZI">
    <property type="method" value="X-ray"/>
    <property type="resolution" value="3.60 A"/>
    <property type="chains" value="L=1-37"/>
</dbReference>
<dbReference type="PDB" id="4FBY">
    <property type="method" value="X-ray"/>
    <property type="resolution" value="6.56 A"/>
    <property type="chains" value="L/d=1-37"/>
</dbReference>
<dbReference type="PDB" id="4IXQ">
    <property type="method" value="X-ray"/>
    <property type="resolution" value="5.70 A"/>
    <property type="chains" value="L/l=1-37"/>
</dbReference>
<dbReference type="PDB" id="4IXR">
    <property type="method" value="X-ray"/>
    <property type="resolution" value="5.90 A"/>
    <property type="chains" value="L/l=1-37"/>
</dbReference>
<dbReference type="PDB" id="4PBU">
    <property type="method" value="X-ray"/>
    <property type="resolution" value="5.00 A"/>
    <property type="chains" value="L/l=1-37"/>
</dbReference>
<dbReference type="PDB" id="4PJ0">
    <property type="method" value="X-ray"/>
    <property type="resolution" value="2.44 A"/>
    <property type="chains" value="L/l=1-37"/>
</dbReference>
<dbReference type="PDB" id="4RVY">
    <property type="method" value="X-ray"/>
    <property type="resolution" value="5.50 A"/>
    <property type="chains" value="L/l=1-37"/>
</dbReference>
<dbReference type="PDB" id="4TNH">
    <property type="method" value="X-ray"/>
    <property type="resolution" value="4.90 A"/>
    <property type="chains" value="L/l=1-37"/>
</dbReference>
<dbReference type="PDB" id="4TNI">
    <property type="method" value="X-ray"/>
    <property type="resolution" value="4.60 A"/>
    <property type="chains" value="L/l=1-37"/>
</dbReference>
<dbReference type="PDB" id="4TNJ">
    <property type="method" value="X-ray"/>
    <property type="resolution" value="4.50 A"/>
    <property type="chains" value="L/l=1-37"/>
</dbReference>
<dbReference type="PDB" id="4TNK">
    <property type="method" value="X-ray"/>
    <property type="resolution" value="5.20 A"/>
    <property type="chains" value="L/l=1-37"/>
</dbReference>
<dbReference type="PDB" id="4V62">
    <property type="method" value="X-ray"/>
    <property type="resolution" value="2.90 A"/>
    <property type="chains" value="AL/BL=1-37"/>
</dbReference>
<dbReference type="PDB" id="4V82">
    <property type="method" value="X-ray"/>
    <property type="resolution" value="3.20 A"/>
    <property type="chains" value="AL/BL=1-37"/>
</dbReference>
<dbReference type="PDB" id="5E79">
    <property type="method" value="X-ray"/>
    <property type="resolution" value="3.50 A"/>
    <property type="chains" value="L/l=1-37"/>
</dbReference>
<dbReference type="PDB" id="5E7C">
    <property type="method" value="X-ray"/>
    <property type="resolution" value="4.50 A"/>
    <property type="chains" value="L/l=1-37"/>
</dbReference>
<dbReference type="PDB" id="5H2F">
    <property type="method" value="X-ray"/>
    <property type="resolution" value="2.20 A"/>
    <property type="chains" value="L/l=3-37"/>
</dbReference>
<dbReference type="PDB" id="5KAF">
    <property type="method" value="X-ray"/>
    <property type="resolution" value="3.00 A"/>
    <property type="chains" value="L/l=1-37"/>
</dbReference>
<dbReference type="PDB" id="5KAI">
    <property type="method" value="X-ray"/>
    <property type="resolution" value="2.80 A"/>
    <property type="chains" value="L/l=1-37"/>
</dbReference>
<dbReference type="PDB" id="5MX2">
    <property type="method" value="X-ray"/>
    <property type="resolution" value="2.20 A"/>
    <property type="chains" value="L/l=1-37"/>
</dbReference>
<dbReference type="PDB" id="5TIS">
    <property type="method" value="X-ray"/>
    <property type="resolution" value="2.25 A"/>
    <property type="chains" value="L/l=1-37"/>
</dbReference>
<dbReference type="PDB" id="5ZZN">
    <property type="method" value="X-ray"/>
    <property type="resolution" value="2.10 A"/>
    <property type="chains" value="L/l=2-37"/>
</dbReference>
<dbReference type="PDB" id="6DHE">
    <property type="method" value="X-ray"/>
    <property type="resolution" value="2.05 A"/>
    <property type="chains" value="L/l=1-37"/>
</dbReference>
<dbReference type="PDB" id="6DHF">
    <property type="method" value="X-ray"/>
    <property type="resolution" value="2.08 A"/>
    <property type="chains" value="L/l=1-37"/>
</dbReference>
<dbReference type="PDB" id="6DHG">
    <property type="method" value="X-ray"/>
    <property type="resolution" value="2.50 A"/>
    <property type="chains" value="L/l=1-37"/>
</dbReference>
<dbReference type="PDB" id="6DHH">
    <property type="method" value="X-ray"/>
    <property type="resolution" value="2.20 A"/>
    <property type="chains" value="L/l=1-37"/>
</dbReference>
<dbReference type="PDB" id="6DHO">
    <property type="method" value="X-ray"/>
    <property type="resolution" value="2.07 A"/>
    <property type="chains" value="L/l=1-37"/>
</dbReference>
<dbReference type="PDB" id="6DHP">
    <property type="method" value="X-ray"/>
    <property type="resolution" value="2.04 A"/>
    <property type="chains" value="L/l=1-37"/>
</dbReference>
<dbReference type="PDB" id="6W1O">
    <property type="method" value="X-ray"/>
    <property type="resolution" value="2.08 A"/>
    <property type="chains" value="L/l=1-37"/>
</dbReference>
<dbReference type="PDB" id="6W1P">
    <property type="method" value="X-ray"/>
    <property type="resolution" value="2.26 A"/>
    <property type="chains" value="L/l=1-37"/>
</dbReference>
<dbReference type="PDB" id="6W1Q">
    <property type="method" value="X-ray"/>
    <property type="resolution" value="2.27 A"/>
    <property type="chains" value="L/l=1-37"/>
</dbReference>
<dbReference type="PDB" id="6W1R">
    <property type="method" value="X-ray"/>
    <property type="resolution" value="2.23 A"/>
    <property type="chains" value="L/l=1-37"/>
</dbReference>
<dbReference type="PDB" id="6W1T">
    <property type="method" value="X-ray"/>
    <property type="resolution" value="2.01 A"/>
    <property type="chains" value="L/l=1-37"/>
</dbReference>
<dbReference type="PDB" id="6W1U">
    <property type="method" value="X-ray"/>
    <property type="resolution" value="2.09 A"/>
    <property type="chains" value="L/l=1-37"/>
</dbReference>
<dbReference type="PDB" id="6W1V">
    <property type="method" value="X-ray"/>
    <property type="resolution" value="2.09 A"/>
    <property type="chains" value="L/l=1-37"/>
</dbReference>
<dbReference type="PDB" id="7NHO">
    <property type="method" value="EM"/>
    <property type="resolution" value="2.66 A"/>
    <property type="chains" value="L=1-37"/>
</dbReference>
<dbReference type="PDB" id="7NHP">
    <property type="method" value="EM"/>
    <property type="resolution" value="2.72 A"/>
    <property type="chains" value="L=1-37"/>
</dbReference>
<dbReference type="PDB" id="7NHQ">
    <property type="method" value="EM"/>
    <property type="resolution" value="2.68 A"/>
    <property type="chains" value="L=1-37"/>
</dbReference>
<dbReference type="PDB" id="7RF1">
    <property type="method" value="X-ray"/>
    <property type="resolution" value="1.89 A"/>
    <property type="chains" value="L/l=1-37"/>
</dbReference>
<dbReference type="PDB" id="7RF2">
    <property type="method" value="X-ray"/>
    <property type="resolution" value="2.08 A"/>
    <property type="chains" value="L/l=1-37"/>
</dbReference>
<dbReference type="PDB" id="7RF3">
    <property type="method" value="X-ray"/>
    <property type="resolution" value="2.26 A"/>
    <property type="chains" value="L/l=1-37"/>
</dbReference>
<dbReference type="PDB" id="7RF4">
    <property type="method" value="X-ray"/>
    <property type="resolution" value="2.27 A"/>
    <property type="chains" value="L/l=1-37"/>
</dbReference>
<dbReference type="PDB" id="7RF5">
    <property type="method" value="X-ray"/>
    <property type="resolution" value="2.23 A"/>
    <property type="chains" value="L/l=1-37"/>
</dbReference>
<dbReference type="PDB" id="7RF6">
    <property type="method" value="X-ray"/>
    <property type="resolution" value="2.01 A"/>
    <property type="chains" value="L/l=1-37"/>
</dbReference>
<dbReference type="PDB" id="7RF7">
    <property type="method" value="X-ray"/>
    <property type="resolution" value="2.09 A"/>
    <property type="chains" value="L/l=1-37"/>
</dbReference>
<dbReference type="PDB" id="7RF8">
    <property type="method" value="X-ray"/>
    <property type="resolution" value="2.09 A"/>
    <property type="chains" value="L/l=1-37"/>
</dbReference>
<dbReference type="PDB" id="7YQ2">
    <property type="method" value="X-ray"/>
    <property type="resolution" value="1.90 A"/>
    <property type="chains" value="L/l=1-37"/>
</dbReference>
<dbReference type="PDB" id="7YQ7">
    <property type="method" value="X-ray"/>
    <property type="resolution" value="1.90 A"/>
    <property type="chains" value="L/l=1-37"/>
</dbReference>
<dbReference type="PDB" id="8EZ5">
    <property type="method" value="X-ray"/>
    <property type="resolution" value="2.09 A"/>
    <property type="chains" value="L/l=1-37"/>
</dbReference>
<dbReference type="PDB" id="8F4C">
    <property type="method" value="X-ray"/>
    <property type="resolution" value="2.00 A"/>
    <property type="chains" value="L/l=1-37"/>
</dbReference>
<dbReference type="PDB" id="8F4D">
    <property type="method" value="X-ray"/>
    <property type="resolution" value="2.15 A"/>
    <property type="chains" value="L/l=1-37"/>
</dbReference>
<dbReference type="PDB" id="8F4E">
    <property type="method" value="X-ray"/>
    <property type="resolution" value="2.09 A"/>
    <property type="chains" value="L/l=1-37"/>
</dbReference>
<dbReference type="PDB" id="8F4F">
    <property type="method" value="X-ray"/>
    <property type="resolution" value="2.03 A"/>
    <property type="chains" value="L/l=1-37"/>
</dbReference>
<dbReference type="PDB" id="8F4G">
    <property type="method" value="X-ray"/>
    <property type="resolution" value="2.03 A"/>
    <property type="chains" value="L/l=1-37"/>
</dbReference>
<dbReference type="PDB" id="8F4H">
    <property type="method" value="X-ray"/>
    <property type="resolution" value="2.10 A"/>
    <property type="chains" value="L/l=1-37"/>
</dbReference>
<dbReference type="PDB" id="8F4I">
    <property type="method" value="X-ray"/>
    <property type="resolution" value="2.00 A"/>
    <property type="chains" value="L/l=1-37"/>
</dbReference>
<dbReference type="PDB" id="8F4J">
    <property type="method" value="X-ray"/>
    <property type="resolution" value="2.00 A"/>
    <property type="chains" value="L/l=1-37"/>
</dbReference>
<dbReference type="PDB" id="8F4K">
    <property type="method" value="X-ray"/>
    <property type="resolution" value="2.16 A"/>
    <property type="chains" value="L/l=1-37"/>
</dbReference>
<dbReference type="PDB" id="9EVX">
    <property type="method" value="EM"/>
    <property type="resolution" value="1.71 A"/>
    <property type="chains" value="L/l=1-37"/>
</dbReference>
<dbReference type="PDBsum" id="1S5L"/>
<dbReference type="PDBsum" id="2AXT"/>
<dbReference type="PDBsum" id="3KZI"/>
<dbReference type="PDBsum" id="4FBY"/>
<dbReference type="PDBsum" id="4IXQ"/>
<dbReference type="PDBsum" id="4IXR"/>
<dbReference type="PDBsum" id="4PBU"/>
<dbReference type="PDBsum" id="4PJ0"/>
<dbReference type="PDBsum" id="4RVY"/>
<dbReference type="PDBsum" id="4TNH"/>
<dbReference type="PDBsum" id="4TNI"/>
<dbReference type="PDBsum" id="4TNJ"/>
<dbReference type="PDBsum" id="4TNK"/>
<dbReference type="PDBsum" id="4V62"/>
<dbReference type="PDBsum" id="4V82"/>
<dbReference type="PDBsum" id="5E79"/>
<dbReference type="PDBsum" id="5E7C"/>
<dbReference type="PDBsum" id="5H2F"/>
<dbReference type="PDBsum" id="5KAF"/>
<dbReference type="PDBsum" id="5KAI"/>
<dbReference type="PDBsum" id="5MX2"/>
<dbReference type="PDBsum" id="5TIS"/>
<dbReference type="PDBsum" id="5ZZN"/>
<dbReference type="PDBsum" id="6DHE"/>
<dbReference type="PDBsum" id="6DHF"/>
<dbReference type="PDBsum" id="6DHG"/>
<dbReference type="PDBsum" id="6DHH"/>
<dbReference type="PDBsum" id="6DHO"/>
<dbReference type="PDBsum" id="6DHP"/>
<dbReference type="PDBsum" id="6W1O"/>
<dbReference type="PDBsum" id="6W1P"/>
<dbReference type="PDBsum" id="6W1Q"/>
<dbReference type="PDBsum" id="6W1R"/>
<dbReference type="PDBsum" id="6W1T"/>
<dbReference type="PDBsum" id="6W1U"/>
<dbReference type="PDBsum" id="6W1V"/>
<dbReference type="PDBsum" id="7NHO"/>
<dbReference type="PDBsum" id="7NHP"/>
<dbReference type="PDBsum" id="7NHQ"/>
<dbReference type="PDBsum" id="7RF1"/>
<dbReference type="PDBsum" id="7RF2"/>
<dbReference type="PDBsum" id="7RF3"/>
<dbReference type="PDBsum" id="7RF4"/>
<dbReference type="PDBsum" id="7RF5"/>
<dbReference type="PDBsum" id="7RF6"/>
<dbReference type="PDBsum" id="7RF7"/>
<dbReference type="PDBsum" id="7RF8"/>
<dbReference type="PDBsum" id="7YQ2"/>
<dbReference type="PDBsum" id="7YQ7"/>
<dbReference type="PDBsum" id="8EZ5"/>
<dbReference type="PDBsum" id="8F4C"/>
<dbReference type="PDBsum" id="8F4D"/>
<dbReference type="PDBsum" id="8F4E"/>
<dbReference type="PDBsum" id="8F4F"/>
<dbReference type="PDBsum" id="8F4G"/>
<dbReference type="PDBsum" id="8F4H"/>
<dbReference type="PDBsum" id="8F4I"/>
<dbReference type="PDBsum" id="8F4J"/>
<dbReference type="PDBsum" id="8F4K"/>
<dbReference type="PDBsum" id="9EVX"/>
<dbReference type="EMDB" id="EMD-12335"/>
<dbReference type="EMDB" id="EMD-12336"/>
<dbReference type="EMDB" id="EMD-12337"/>
<dbReference type="EMDB" id="EMD-50019"/>
<dbReference type="SMR" id="Q8DIN8"/>
<dbReference type="DIP" id="DIP-48497N"/>
<dbReference type="IntAct" id="Q8DIN8">
    <property type="interactions" value="1"/>
</dbReference>
<dbReference type="STRING" id="197221.gene:10748144"/>
<dbReference type="EnsemblBacteria" id="BAC09095">
    <property type="protein sequence ID" value="BAC09095"/>
    <property type="gene ID" value="BAC09095"/>
</dbReference>
<dbReference type="KEGG" id="tel:tsr1543"/>
<dbReference type="PATRIC" id="fig|197221.4.peg.1619"/>
<dbReference type="eggNOG" id="ENOG5033AKP">
    <property type="taxonomic scope" value="Bacteria"/>
</dbReference>
<dbReference type="EvolutionaryTrace" id="Q8DIN8"/>
<dbReference type="Proteomes" id="UP000000440">
    <property type="component" value="Chromosome"/>
</dbReference>
<dbReference type="GO" id="GO:0009539">
    <property type="term" value="C:photosystem II reaction center"/>
    <property type="evidence" value="ECO:0007669"/>
    <property type="project" value="InterPro"/>
</dbReference>
<dbReference type="GO" id="GO:0031676">
    <property type="term" value="C:plasma membrane-derived thylakoid membrane"/>
    <property type="evidence" value="ECO:0007669"/>
    <property type="project" value="UniProtKB-SubCell"/>
</dbReference>
<dbReference type="GO" id="GO:0015979">
    <property type="term" value="P:photosynthesis"/>
    <property type="evidence" value="ECO:0007669"/>
    <property type="project" value="UniProtKB-UniRule"/>
</dbReference>
<dbReference type="HAMAP" id="MF_01317">
    <property type="entry name" value="PSII_PsbL"/>
    <property type="match status" value="1"/>
</dbReference>
<dbReference type="InterPro" id="IPR003372">
    <property type="entry name" value="PSII_PsbL"/>
</dbReference>
<dbReference type="InterPro" id="IPR037266">
    <property type="entry name" value="PSII_PsbL_sf"/>
</dbReference>
<dbReference type="NCBIfam" id="NF001972">
    <property type="entry name" value="PRK00753.1"/>
    <property type="match status" value="1"/>
</dbReference>
<dbReference type="Pfam" id="PF02419">
    <property type="entry name" value="PsbL"/>
    <property type="match status" value="1"/>
</dbReference>
<dbReference type="SUPFAM" id="SSF161017">
    <property type="entry name" value="Photosystem II reaction center protein L, PsbL"/>
    <property type="match status" value="1"/>
</dbReference>
<sequence length="37" mass="4297">MEPNPNRQPVELNRTSLYLGLLLILVLALLFSSYFFN</sequence>
<evidence type="ECO:0000255" key="1">
    <source>
        <dbReference type="HAMAP-Rule" id="MF_01317"/>
    </source>
</evidence>
<evidence type="ECO:0000269" key="2">
    <source>
    </source>
</evidence>
<evidence type="ECO:0000269" key="3">
    <source>
    </source>
</evidence>
<evidence type="ECO:0000269" key="4">
    <source>
    </source>
</evidence>
<evidence type="ECO:0000269" key="5">
    <source>
    </source>
</evidence>
<evidence type="ECO:0000269" key="6">
    <source>
    </source>
</evidence>
<evidence type="ECO:0000269" key="7">
    <source>
    </source>
</evidence>
<evidence type="ECO:0000269" key="8">
    <source>
    </source>
</evidence>
<evidence type="ECO:0000269" key="9">
    <source>
    </source>
</evidence>
<evidence type="ECO:0000269" key="10">
    <source>
    </source>
</evidence>
<evidence type="ECO:0000269" key="11">
    <source>
    </source>
</evidence>
<evidence type="ECO:0000269" key="12">
    <source>
    </source>
</evidence>
<evidence type="ECO:0000269" key="13">
    <source>
    </source>
</evidence>
<evidence type="ECO:0007744" key="14">
    <source>
        <dbReference type="PDB" id="7NHO"/>
    </source>
</evidence>
<evidence type="ECO:0007744" key="15">
    <source>
        <dbReference type="PDB" id="7NHP"/>
    </source>
</evidence>
<evidence type="ECO:0007744" key="16">
    <source>
        <dbReference type="PDB" id="7NHQ"/>
    </source>
</evidence>
<evidence type="ECO:0007829" key="17">
    <source>
        <dbReference type="PDB" id="7YQ2"/>
    </source>
</evidence>